<organism>
    <name type="scientific">Pseudoalteromonas translucida (strain TAC 125)</name>
    <dbReference type="NCBI Taxonomy" id="326442"/>
    <lineage>
        <taxon>Bacteria</taxon>
        <taxon>Pseudomonadati</taxon>
        <taxon>Pseudomonadota</taxon>
        <taxon>Gammaproteobacteria</taxon>
        <taxon>Alteromonadales</taxon>
        <taxon>Pseudoalteromonadaceae</taxon>
        <taxon>Pseudoalteromonas</taxon>
    </lineage>
</organism>
<feature type="chain" id="PRO_0000304469" description="2-dehydro-3-deoxyphosphooctonate aldolase">
    <location>
        <begin position="1"/>
        <end position="284"/>
    </location>
</feature>
<name>KDSA_PSET1</name>
<protein>
    <recommendedName>
        <fullName evidence="1">2-dehydro-3-deoxyphosphooctonate aldolase</fullName>
        <ecNumber evidence="1">2.5.1.55</ecNumber>
    </recommendedName>
    <alternativeName>
        <fullName evidence="1">3-deoxy-D-manno-octulosonic acid 8-phosphate synthase</fullName>
    </alternativeName>
    <alternativeName>
        <fullName evidence="1">KDO-8-phosphate synthase</fullName>
        <shortName evidence="1">KDO 8-P synthase</shortName>
        <shortName evidence="1">KDOPS</shortName>
    </alternativeName>
    <alternativeName>
        <fullName evidence="1">Phospho-2-dehydro-3-deoxyoctonate aldolase</fullName>
    </alternativeName>
</protein>
<proteinExistence type="inferred from homology"/>
<dbReference type="EC" id="2.5.1.55" evidence="1"/>
<dbReference type="EMBL" id="CR954246">
    <property type="protein sequence ID" value="CAI86138.1"/>
    <property type="molecule type" value="Genomic_DNA"/>
</dbReference>
<dbReference type="SMR" id="Q3IK90"/>
<dbReference type="STRING" id="326442.PSHAa1063"/>
<dbReference type="KEGG" id="pha:PSHAa1063"/>
<dbReference type="eggNOG" id="COG2877">
    <property type="taxonomic scope" value="Bacteria"/>
</dbReference>
<dbReference type="HOGENOM" id="CLU_036666_0_0_6"/>
<dbReference type="BioCyc" id="PHAL326442:PSHA_RS05235-MONOMER"/>
<dbReference type="UniPathway" id="UPA00030"/>
<dbReference type="UniPathway" id="UPA00357">
    <property type="reaction ID" value="UER00474"/>
</dbReference>
<dbReference type="Proteomes" id="UP000006843">
    <property type="component" value="Chromosome I"/>
</dbReference>
<dbReference type="GO" id="GO:0005737">
    <property type="term" value="C:cytoplasm"/>
    <property type="evidence" value="ECO:0007669"/>
    <property type="project" value="UniProtKB-SubCell"/>
</dbReference>
<dbReference type="GO" id="GO:0008676">
    <property type="term" value="F:3-deoxy-8-phosphooctulonate synthase activity"/>
    <property type="evidence" value="ECO:0007669"/>
    <property type="project" value="UniProtKB-UniRule"/>
</dbReference>
<dbReference type="GO" id="GO:0019294">
    <property type="term" value="P:keto-3-deoxy-D-manno-octulosonic acid biosynthetic process"/>
    <property type="evidence" value="ECO:0007669"/>
    <property type="project" value="UniProtKB-UniRule"/>
</dbReference>
<dbReference type="Gene3D" id="3.20.20.70">
    <property type="entry name" value="Aldolase class I"/>
    <property type="match status" value="1"/>
</dbReference>
<dbReference type="HAMAP" id="MF_00056">
    <property type="entry name" value="KDO8P_synth"/>
    <property type="match status" value="1"/>
</dbReference>
<dbReference type="InterPro" id="IPR013785">
    <property type="entry name" value="Aldolase_TIM"/>
</dbReference>
<dbReference type="InterPro" id="IPR006218">
    <property type="entry name" value="DAHP1/KDSA"/>
</dbReference>
<dbReference type="InterPro" id="IPR006269">
    <property type="entry name" value="KDO8P_synthase"/>
</dbReference>
<dbReference type="NCBIfam" id="TIGR01362">
    <property type="entry name" value="KDO8P_synth"/>
    <property type="match status" value="1"/>
</dbReference>
<dbReference type="NCBIfam" id="NF003543">
    <property type="entry name" value="PRK05198.1"/>
    <property type="match status" value="1"/>
</dbReference>
<dbReference type="NCBIfam" id="NF009109">
    <property type="entry name" value="PRK12457.1"/>
    <property type="match status" value="1"/>
</dbReference>
<dbReference type="PANTHER" id="PTHR21057">
    <property type="entry name" value="PHOSPHO-2-DEHYDRO-3-DEOXYHEPTONATE ALDOLASE"/>
    <property type="match status" value="1"/>
</dbReference>
<dbReference type="Pfam" id="PF00793">
    <property type="entry name" value="DAHP_synth_1"/>
    <property type="match status" value="1"/>
</dbReference>
<dbReference type="SUPFAM" id="SSF51569">
    <property type="entry name" value="Aldolase"/>
    <property type="match status" value="1"/>
</dbReference>
<gene>
    <name evidence="1" type="primary">kdsA</name>
    <name type="ordered locus">PSHAa1063</name>
</gene>
<comment type="catalytic activity">
    <reaction evidence="1">
        <text>D-arabinose 5-phosphate + phosphoenolpyruvate + H2O = 3-deoxy-alpha-D-manno-2-octulosonate-8-phosphate + phosphate</text>
        <dbReference type="Rhea" id="RHEA:14053"/>
        <dbReference type="ChEBI" id="CHEBI:15377"/>
        <dbReference type="ChEBI" id="CHEBI:43474"/>
        <dbReference type="ChEBI" id="CHEBI:57693"/>
        <dbReference type="ChEBI" id="CHEBI:58702"/>
        <dbReference type="ChEBI" id="CHEBI:85985"/>
        <dbReference type="EC" id="2.5.1.55"/>
    </reaction>
</comment>
<comment type="pathway">
    <text evidence="1">Carbohydrate biosynthesis; 3-deoxy-D-manno-octulosonate biosynthesis; 3-deoxy-D-manno-octulosonate from D-ribulose 5-phosphate: step 2/3.</text>
</comment>
<comment type="pathway">
    <text evidence="1">Bacterial outer membrane biogenesis; lipopolysaccharide biosynthesis.</text>
</comment>
<comment type="subcellular location">
    <subcellularLocation>
        <location evidence="1">Cytoplasm</location>
    </subcellularLocation>
</comment>
<comment type="similarity">
    <text evidence="1">Belongs to the KdsA family.</text>
</comment>
<sequence length="284" mass="30944">MNNQIIKINDIELANNKPFVLFGGINVLESRDLAMRVAEHYVEVTTKLNIPYVFKASFDKANRSSINSYRGPGLDEGLKIFEEIKKTFNIPLITDVHEPHQAAPVAEVVDVIQLPAFLARQTDLVVAMAKTGAIINVKKPQFLAPHEMRHIITKFNEAGNNNVALCERGSSFGYNNLVVDMLGMDDMKVMAPVIFDATHALQRPGGRADSADGRRAQAAELARSGMALGIAGLFIEAHPNPNEAKCDGPCALALSKLEGYLTQMKAVDDLIKSFAPLDTSASDL</sequence>
<evidence type="ECO:0000255" key="1">
    <source>
        <dbReference type="HAMAP-Rule" id="MF_00056"/>
    </source>
</evidence>
<accession>Q3IK90</accession>
<reference key="1">
    <citation type="journal article" date="2005" name="Genome Res.">
        <title>Coping with cold: the genome of the versatile marine Antarctica bacterium Pseudoalteromonas haloplanktis TAC125.</title>
        <authorList>
            <person name="Medigue C."/>
            <person name="Krin E."/>
            <person name="Pascal G."/>
            <person name="Barbe V."/>
            <person name="Bernsel A."/>
            <person name="Bertin P.N."/>
            <person name="Cheung F."/>
            <person name="Cruveiller S."/>
            <person name="D'Amico S."/>
            <person name="Duilio A."/>
            <person name="Fang G."/>
            <person name="Feller G."/>
            <person name="Ho C."/>
            <person name="Mangenot S."/>
            <person name="Marino G."/>
            <person name="Nilsson J."/>
            <person name="Parrilli E."/>
            <person name="Rocha E.P.C."/>
            <person name="Rouy Z."/>
            <person name="Sekowska A."/>
            <person name="Tutino M.L."/>
            <person name="Vallenet D."/>
            <person name="von Heijne G."/>
            <person name="Danchin A."/>
        </authorList>
    </citation>
    <scope>NUCLEOTIDE SEQUENCE [LARGE SCALE GENOMIC DNA]</scope>
    <source>
        <strain>TAC 125</strain>
    </source>
</reference>
<keyword id="KW-0963">Cytoplasm</keyword>
<keyword id="KW-0448">Lipopolysaccharide biosynthesis</keyword>
<keyword id="KW-1185">Reference proteome</keyword>
<keyword id="KW-0808">Transferase</keyword>